<accession>P81362</accession>
<name>UN46_CLOPA</name>
<comment type="miscellaneous">
    <text>On the 2D-gel the determined pI of this unknown protein is: 5.4, its MW is: 38.2 kDa.</text>
</comment>
<reference key="1">
    <citation type="journal article" date="1998" name="Electrophoresis">
        <title>Two-dimensional gel electrophoresis separation and N-terminal sequence analysis of proteins from Clostridium pasteurianum W5.</title>
        <authorList>
            <person name="Flengsrud R."/>
            <person name="Skjeldal L."/>
        </authorList>
    </citation>
    <scope>PROTEIN SEQUENCE</scope>
    <source>
        <strain>ATCC 6013 / DSM 525 / NCIB 9486 / VKM B-1774 / W5</strain>
    </source>
</reference>
<feature type="chain" id="PRO_0000055546" description="Unknown protein CP 46 from 2D-PAGE">
    <location>
        <begin position="1"/>
        <end position="14" status="greater than"/>
    </location>
</feature>
<feature type="non-terminal residue">
    <location>
        <position position="14"/>
    </location>
</feature>
<sequence length="14" mass="1550">MIFNDLIGNNNIGD</sequence>
<organism>
    <name type="scientific">Clostridium pasteurianum</name>
    <dbReference type="NCBI Taxonomy" id="1501"/>
    <lineage>
        <taxon>Bacteria</taxon>
        <taxon>Bacillati</taxon>
        <taxon>Bacillota</taxon>
        <taxon>Clostridia</taxon>
        <taxon>Eubacteriales</taxon>
        <taxon>Clostridiaceae</taxon>
        <taxon>Clostridium</taxon>
    </lineage>
</organism>
<keyword id="KW-0903">Direct protein sequencing</keyword>
<proteinExistence type="evidence at protein level"/>
<protein>
    <recommendedName>
        <fullName>Unknown protein CP 46 from 2D-PAGE</fullName>
    </recommendedName>
</protein>